<protein>
    <recommendedName>
        <fullName evidence="1">Small ribosomal subunit protein eS8</fullName>
    </recommendedName>
    <alternativeName>
        <fullName>40S ribosomal protein S8</fullName>
    </alternativeName>
</protein>
<proteinExistence type="evidence at transcript level"/>
<dbReference type="EMBL" id="AF078069">
    <property type="protein sequence ID" value="AAC64931.1"/>
    <property type="molecule type" value="mRNA"/>
</dbReference>
<dbReference type="SMR" id="Q9ZT56"/>
<dbReference type="GO" id="GO:1990904">
    <property type="term" value="C:ribonucleoprotein complex"/>
    <property type="evidence" value="ECO:0007669"/>
    <property type="project" value="UniProtKB-KW"/>
</dbReference>
<dbReference type="GO" id="GO:0005840">
    <property type="term" value="C:ribosome"/>
    <property type="evidence" value="ECO:0007669"/>
    <property type="project" value="UniProtKB-KW"/>
</dbReference>
<dbReference type="GO" id="GO:0003735">
    <property type="term" value="F:structural constituent of ribosome"/>
    <property type="evidence" value="ECO:0007669"/>
    <property type="project" value="InterPro"/>
</dbReference>
<dbReference type="GO" id="GO:0006412">
    <property type="term" value="P:translation"/>
    <property type="evidence" value="ECO:0007669"/>
    <property type="project" value="InterPro"/>
</dbReference>
<dbReference type="CDD" id="cd11380">
    <property type="entry name" value="Ribosomal_S8e_like"/>
    <property type="match status" value="1"/>
</dbReference>
<dbReference type="Gene3D" id="3.10.290.70">
    <property type="match status" value="1"/>
</dbReference>
<dbReference type="Gene3D" id="1.10.168.20">
    <property type="entry name" value="Ribosomal protein S8e, subdomain"/>
    <property type="match status" value="1"/>
</dbReference>
<dbReference type="InterPro" id="IPR001047">
    <property type="entry name" value="Ribosomal_eS8"/>
</dbReference>
<dbReference type="InterPro" id="IPR042563">
    <property type="entry name" value="Ribosomal_protein_eS8_euk"/>
</dbReference>
<dbReference type="InterPro" id="IPR022309">
    <property type="entry name" value="Ribosomal_Se8/biogenesis_NSA2"/>
</dbReference>
<dbReference type="NCBIfam" id="TIGR00307">
    <property type="entry name" value="eS8"/>
    <property type="match status" value="1"/>
</dbReference>
<dbReference type="PANTHER" id="PTHR10394">
    <property type="entry name" value="40S RIBOSOMAL PROTEIN S8"/>
    <property type="match status" value="1"/>
</dbReference>
<dbReference type="Pfam" id="PF01201">
    <property type="entry name" value="Ribosomal_S8e"/>
    <property type="match status" value="1"/>
</dbReference>
<name>RS8_GRIJA</name>
<organism>
    <name type="scientific">Griffithsia japonica</name>
    <name type="common">Red alga</name>
    <dbReference type="NCBI Taxonomy" id="83288"/>
    <lineage>
        <taxon>Eukaryota</taxon>
        <taxon>Rhodophyta</taxon>
        <taxon>Florideophyceae</taxon>
        <taxon>Rhodymeniophycidae</taxon>
        <taxon>Ceramiales</taxon>
        <taxon>Ceramiaceae</taxon>
        <taxon>Griffithsia</taxon>
    </lineage>
</organism>
<keyword id="KW-0687">Ribonucleoprotein</keyword>
<keyword id="KW-0689">Ribosomal protein</keyword>
<accession>Q9ZT56</accession>
<feature type="chain" id="PRO_0000122252" description="Small ribosomal subunit protein eS8">
    <location>
        <begin position="1"/>
        <end position="204"/>
    </location>
</feature>
<evidence type="ECO:0000305" key="1"/>
<reference key="1">
    <citation type="journal article" date="1998" name="Algae">
        <title>Isolation and characterization of a cDNA encoding 40S ribosomal protein S8 from a red Alga, Griffithsia japonica (Ceramiales, Rhodophyta).</title>
        <authorList>
            <person name="Lee Y.K."/>
            <person name="Hong C.B."/>
            <person name="Lim N.-K."/>
            <person name="So J.-S."/>
            <person name="Lee I.K."/>
        </authorList>
    </citation>
    <scope>NUCLEOTIDE SEQUENCE [MRNA]</scope>
</reference>
<gene>
    <name type="primary">RPS8</name>
</gene>
<comment type="similarity">
    <text evidence="1">Belongs to the eukaryotic ribosomal protein eS8 family.</text>
</comment>
<sequence>MGISRDSRHKRRLTGGKHPYTCKKRKYELGRQPAMTKIGGKLVRTVRVRGGNLKSRALRLESGNFAWGSEAFTSKSRILNVVYNASNNELVRTNTFVKGCIIQIDATPFRQYYHNHYGIDIGKKKAGDEESKFSKRHAGKQEKRCQTRLPLDEGIKELFQSGRLYASIASRPGQSGRADGYLLEGKELEFYAKAMQKKKKAGKS</sequence>